<sequence>MATFSATGFGGSFVRDWSLDLPDACEHGAGLCCEVDGSTLCAECFRGCEGMEQCPGLFMGLLKLASPVPVGHKFLIGWYRAAKVTGRYNFLELLQHPAFAQLRVVDARLAIEEASVFISTDHASAKRFPGARFALTPVYANAWVVSPAANSLIVTTDQEQDGFCWLKLLPPDRREAGLRLYYNHYREQRTGWLSKTGLRLWLGDLGLGINASSGGLKFHIMRGSPQRAWHITTRSCKLKSYYVCDISEADWSCLPAGNYGGYNPPGDGACGYRCLAFMNGATVVSAGCSSDLWCDDELAYRVFQLSPTFTVTIPGGRVCPNAKYAMICDKQHWRVKRAKGVGLCLDESCFRGICNCQRMSGPPPAPVSAAVLDHILEAATFGNVRVVTPEGQPRPVPAPRVRPSANSSGDVKDPAPVPPVPKPRTKLATPNPTQAPIPAPRTRLQGASTQEPLASAGVASDSAPKWRVAKTVYSSAERFRTELVQRARSVGDVLVQALPLKTPAVQRYTMTLKMMRSRFSWHCDVWYPLAVIACLLPIWPSLALLLSFAIGLIPSVGNNVVLTALLVSSANYVASMDHQCEGAACLALLEEEHYYRAVRWRPITGALSLVLNLLGQVGYVARSTFDAAYVPCTVFDLCSFAILYLCRNRCWRCFGRCVRVGPATHVLGSTGQRVSKLALIDLCDHFSKPTIDVVGMATGWSGCYTGTAAMERQCASTVDPHSFDQKKAGATVYLTPPVNSGSALQCLNVMWKRPIGSTVLGEQTGAVVTAVKSISFSPPCCVSTTLPTRPGVTVVDHALYNRLTASGVDPALLRVGQGDFLKLNPGFRLIGGWIYGICYFVLVVVSTFTCLPIKCGIGTRDPFCRRVFSVPVTKTQEHCHAGMCASAEGISLDSLGLTQLQSYWIAAVTSGLVILLVCHRLAISALDLLTLASPLVLLVFPWASVGLLLACSLAGAAVKIQLLATLFVNLFFPQATLVTMGYWACVAALAVYSLMGLRVKVNVPMCVTPAHFLLLARSAGQSREQMLRVSAAAPTNSLLGVARDCYVTGTTRLYIPKEGGMVFEGLFRSPKARGNVGFVAGSSYGTGSVWTRNNEVVVLTASHVVGRANMATLKIGDAMLTLTFKKNGDFAEAVTTQSELPGNWPQLHFAQPTTGPASWCTATGDEEGLLSGEVCLAWTTSGDSGSAVVQGDAVVGVHTGSNTSGVAYVTTPSGKLLGADTVTLSSLSKHFTGPLTSIPKDIPDNIIADVDAVPRSLAMLIDGLSNRESSLSGPQLLLIACFMWSYLNQPAYLPYVLGFFAANFFLPKSVGRPVVTGLLWLCCLFTPLSMRLCLFHLVCATVTGNVISLWFYITAAGTSYLSEMWFGGYPTMLFVPRFLVYQFPGWAIGTVLAVCSITMLAAALGHTLLLDVFSASGRFDRTFMMKYFLEGGVKESVTASVTRAYGKPITQESLTATLAALTDDDFQFLSDVLDCRAVRSAMNLRAALTSFQVAQYRNILNASLQVDRDAARSRRLMAKLADFAVEQEVTAGDRVVVIDGLDRMAHFKDDLVLVPLTTKVVGGSRCTICDVVKEEANDTPVKPMPSRRRRKGLPKGAQLEWDRHQEEKRNAGDDDFAVSNDYVKRVPKYWDPSDTRGTTVKIAGTTYQKVVDYSGNVHYVEHQEDLLDYVLGKGSYEGLDQDKVLDLTNMLKVDPTELSSKDKAKARQLAHLLLDLANPVEAVNQLNLRAPHIFPGDVGRRTFADSKDKGFVALHSRTMFLAARDFLFNIKFVCDEEFTKTPKDTLLGYVRACPGYWFIFRRTHRSLIDAYWDSMECVYALPTISDFDVSPGDVAVTGERWDFESPGGGRAKRLTADLVHAFQGFHGASYSYDDKVAAAVSGDPYRSDGVLYNTRWGNIPYSVPTNALEATACYRAGCEAVTDGTNVIATIGPFPEQQPIPDIPKSVLDNCADISCDAFIAPAAETALCGDLEKYNLSTQGFVLPSVFSMVRAYLKEEIGDAPPLYLPSTVPSKNSQAGINGAEFPTKSLQSYCLIDDMVSQSMKSNLQTATMATCKRQYCSKYKIRSILGTNNYIGLGLRACLSGVTAAFQKAGKDGSPIYLGKSKFDPIPAPDKYCLETDLESCDRSTPALVRWFATNLIFELAGQPELVHSYVLNCCHDLVVAGSVAFTKRGGLSSGDPITSISNTIYSLVLYTQHMLLCGLEGYFPEIAEKYLDGSLELRDMFKYVRVYIYSDDVVLTTPNQHYAASFDRWVPHLQALLGFKVDPKKTVNTSSPSFLGCRFKQVDGKCYLASLQDRVTRSLLYHIGAKNPSEYYEAAVSIFKDSIICCDEDWWTDLHRRISGAARTDGVEFPTIEMLTSFRTKQYESAVCTVCGAAPVAKSACGGWFCGNCVPYHAGHCHTTSLFANCGHDIMYRSTYCTMCEGSPKQMVPKVPHPILDHLLCHIDYGSKEELTLVVADGRTTSPPGRYKVGHKVVAVVADVGGNIVFGCGPGSHIAVPLQDTLKGVVVNKALKNAAASEYVEGPPGSGKTFHLVKDVLAVVGSATLVVPTHASMLDCINKLKQAGADPYFVVPKYTVLDFPRPGSGNITVRLPQVGTSEGETFVDEVAYFSPVDLARILTQGRVKGYGDLNQLGCVGPASVPRNLWLRHFVSLEPLRVCHRFGAAVCDLIKGIYPYYEPAPHTTKVVFVPNPDFEKGVVITAYHKDRGLGHRTIDSIQGCTFPVVTLRLPTPQSLTRPRAVVAVTRASQELYIYDPFDQLSGLLKFTKEAEAQDLIHGPPTACHLGQEIDLWSNEGLEYYKEVNLLYTHVPIKDGVIHSYPNCGPACGWEKQSNKISCLPRVAQNLGYHYSPDLPGFCPIPKELAEHWPVVSNDRYPNCLQITLQQVCELSKPCSAGYMVGQSVFVQTPGVTSYWLTEWVDGKARALPDSLFSSGRFETNSRAFLDEAEEKFAAAHPHACLGEINKSTVGGSHFIFSQYLPPLLPADAVALVGASLAGKAAKAACSVVDVYAPSFEPYLHPETLSRVYKIMIDFKPCRLMVWRNATFYVQEGVDAVTSALAAVSKLIKVPANEPVSFHVASGYRTNALVAPQAKISIGAYAAEWALSTEPPPAGYAIVRRYIVKRLLSSTEVFLCRRGVVSSTSVQTICALEGCKPLFNFLQIGSVIGPV</sequence>
<reference key="1">
    <citation type="journal article" date="1991" name="J. Virol.">
        <title>Equine arteritis virus is not a togavirus but belongs to the coronaviruslike superfamily.</title>
        <authorList>
            <person name="den Boon J.A."/>
            <person name="Snijder E.J."/>
            <person name="Chirnside E.D."/>
            <person name="de Vries A.A.F."/>
            <person name="Horzinek M.C."/>
            <person name="Spaan W.J.M."/>
        </authorList>
    </citation>
    <scope>NUCLEOTIDE SEQUENCE [GENOMIC RNA]</scope>
</reference>
<reference key="2">
    <citation type="submission" date="2001-06" db="EMBL/GenBank/DDBJ databases">
        <authorList>
            <person name="Snijder E.J."/>
        </authorList>
    </citation>
    <scope>SEQUENCE REVISION</scope>
</reference>
<reference key="3">
    <citation type="journal article" date="1990" name="Nucleic Acids Res.">
        <title>All subgenomic mRNAs of equine arteritis virus contain a common leader sequence.</title>
        <authorList>
            <person name="de Vries A.A.F."/>
            <person name="Chirnside E.D."/>
            <person name="Bredenbeek P.J."/>
            <person name="Gravestein L.A."/>
            <person name="Horzinek M.C."/>
            <person name="Spaan W.J.M."/>
        </authorList>
    </citation>
    <scope>NUCLEOTIDE SEQUENCE [GENOMIC RNA] OF 1-17</scope>
</reference>
<reference key="4">
    <citation type="journal article" date="1992" name="J. Virol.">
        <title>The 5' end of the equine arteritis virus replicase gene encodes a papainlike cysteine protease.</title>
        <authorList>
            <person name="Snijder E.J."/>
            <person name="Wassenaar A.L.M."/>
            <person name="Spaan W.J.M."/>
        </authorList>
    </citation>
    <scope>PROTEOLYTIC PROCESSING OF POLYPROTEIN 1A</scope>
    <scope>CHARACTERIZATION OF PCP</scope>
    <scope>MUTAGENESIS OF CYS-164; HIS-219; HIS-230 AND GLY-260</scope>
    <scope>CATALYTIC ACTIVITY</scope>
    <scope>ACTIVE SITE</scope>
</reference>
<reference key="5">
    <citation type="journal article" date="1995" name="J. Biol. Chem.">
        <title>The arterivirus Nsp2 protease. An unusual cysteine protease with primary structure similarities to both papain-like and chymotrypsin-like proteases.</title>
        <authorList>
            <person name="Snijder E.J."/>
            <person name="Wassenaar A.L.M."/>
            <person name="Spaan W.J.M."/>
            <person name="Gorbalenya A.E."/>
        </authorList>
    </citation>
    <scope>CHARACTERIZATION OF NSP2</scope>
    <scope>ACTIVE SITE</scope>
    <scope>MUTAGENESIS OF CYS-270; GLY-271; ASP-291; ASP-295; ASP-296; GLU-297; CYS-319; HIS-332; CYS-344; CYS-349; CYS-354 AND CYS-356</scope>
</reference>
<reference key="6">
    <citation type="journal article" date="1996" name="J. Biol. Chem.">
        <title>The arterivirus nsp4 protease is the prototype of a novel group of chymotrypsin-like enzymes, the 3C-like serine proteases.</title>
        <authorList>
            <person name="Snijder E.J."/>
            <person name="Wassenaar A.L.M."/>
            <person name="van Dinten L.C."/>
            <person name="Spaan W.J.M."/>
            <person name="Gorbalenya A.E."/>
        </authorList>
    </citation>
    <scope>PROTEOLYTIC PROCESSING OF POLYPROTEIN 1A</scope>
    <scope>CHARACTERIZATION OF 3CLSP</scope>
    <scope>CATALYTIC ACTIVITY</scope>
    <scope>ACTIVE SITE</scope>
    <scope>MUTAGENESIS OF CYS-164; GLY-831; GLU-1064; HIS-1103; ASP-1117; ASP-1129; THR-1179; SER-1184; HIS-1198; GLU-1268; GLU-1430 AND GLU-1677</scope>
</reference>
<reference key="7">
    <citation type="journal article" date="1997" name="Proc. Natl. Acad. Sci. U.S.A.">
        <title>An infectious arterivirus cDNA clone: identification of a replicase point mutation that abolishes discontinuous mRNA transcription.</title>
        <authorList>
            <person name="van Dinten L.C."/>
            <person name="den Boon J.A."/>
            <person name="Wassenaar A.L.M."/>
            <person name="Spaan W.J.M."/>
            <person name="Snijder E.J."/>
        </authorList>
    </citation>
    <scope>MUTAGENESIS OF SER-2429</scope>
</reference>
<reference key="8">
    <citation type="journal article" date="1997" name="J. Virol.">
        <title>Alternative proteolytic processing of the arterivirus replicase ORF1a polyprotein: evidence that NSP2 acts as a cofactor for the NSP4 serine protease.</title>
        <authorList>
            <person name="Wassenaar A.L.M."/>
            <person name="Spaan W.J.M."/>
            <person name="Gorbalenya A.E."/>
            <person name="Snijder E.J."/>
        </authorList>
    </citation>
    <scope>PROTEOLYTIC PROCESSING OF POLYPROTEIN 1A</scope>
    <scope>MUTAGENESIS OF GLU-1268</scope>
</reference>
<reference key="9">
    <citation type="journal article" date="1998" name="J. Virol.">
        <title>ORF1a-encoded replicase subunits are involved in the membrane association of the arterivirus replication complex.</title>
        <authorList>
            <person name="van der Meer Y."/>
            <person name="van Tol H."/>
            <person name="Locker J.K."/>
            <person name="Snijder E.J."/>
        </authorList>
    </citation>
    <scope>SUBCELLULAR LOCATION</scope>
</reference>
<reference key="10">
    <citation type="journal article" date="1999" name="J. Virol.">
        <title>Proteolytic processing of the open reading frame 1b-encoded part of arterivirus replicase is mediated by nsp4 serine protease and is essential for virus replication.</title>
        <authorList>
            <person name="van Dinten L.C."/>
            <person name="Rensen S."/>
            <person name="Gorbalenya A.E."/>
            <person name="Snijder E.J."/>
        </authorList>
    </citation>
    <scope>PROTEOLYTIC PROCESSING OF POLYPROTEIN 1B</scope>
    <scope>MUTAGENESIS OF ASP-2351; GLU-2370; GLU-2800; ASP-2819; GLU-2835; GLN-2837 AND GLU-3056</scope>
</reference>
<reference key="11">
    <citation type="journal article" date="2000" name="J. Virol.">
        <title>Biochemical characterization of the equine arteritis virus helicase suggests a close functional relationship between arterivirus and coronavirus helicases.</title>
        <authorList>
            <person name="Seybert A."/>
            <person name="van Dinten L.C."/>
            <person name="Snijder E.J."/>
            <person name="Ziebuhr J."/>
        </authorList>
    </citation>
    <scope>CHARACTERIZATION OF HELICASE</scope>
</reference>
<reference key="12">
    <citation type="journal article" date="2001" name="Proc. Natl. Acad. Sci. U.S.A.">
        <title>A zinc finger-containing papain-like protease couples subgenomic mRNA synthesis to genome translation in a positive-stranded RNA virus.</title>
        <authorList>
            <person name="Tijms M.A."/>
            <person name="van Dinten L.C."/>
            <person name="Gorbalenya A.E."/>
            <person name="Snijder E.J."/>
        </authorList>
    </citation>
    <scope>C4-TYPE ZINC-FINGER OF NSP1</scope>
    <scope>MUTAGENESIS OF CYS-25 AND CYS-44</scope>
</reference>
<reference key="13">
    <citation type="journal article" date="2002" name="J. Gen. Virol.">
        <title>Nuclear localization of non-structural protein 1 and nucleocapsid protein of equine arteritis virus.</title>
        <authorList>
            <person name="Tijms M.A."/>
            <person name="van der Meer Y."/>
            <person name="Snijder E.J."/>
        </authorList>
    </citation>
    <scope>SUBCELLULAR LOCATION OF NSP1 PAPAIN-LIKE CYSTEINE PROTEINASE</scope>
</reference>
<reference key="14">
    <citation type="journal article" date="2003" name="J. Gen. Virol.">
        <title>Equine arteritis virus non-structural protein 1, an essential factor for viral subgenomic mRNA synthesis, interacts with the cellular transcription co-factor p100.</title>
        <authorList>
            <person name="Tijms M.A."/>
            <person name="Snijder E.J."/>
        </authorList>
    </citation>
    <scope>INTERACTION WITH HUMAN SND1/P100</scope>
</reference>
<reference key="15">
    <citation type="journal article" date="2007" name="Cell Host Microbe">
        <title>Ovarian tumor domain-containing viral proteases evade ubiquitin- and ISG15-dependent innate immune responses.</title>
        <authorList>
            <person name="Frias-Staheli N."/>
            <person name="Giannakopoulos N.V."/>
            <person name="Kikkert M."/>
            <person name="Taylor S.L."/>
            <person name="Bridgen A."/>
            <person name="Paragas J."/>
            <person name="Richt J.A."/>
            <person name="Rowland R.R."/>
            <person name="Schmaljohn C.S."/>
            <person name="Lenschow D.J."/>
            <person name="Snijder E.J."/>
            <person name="Garcia-Sastre A."/>
            <person name="Virgin H.W."/>
        </authorList>
    </citation>
    <scope>FUNCTION OF NSP2</scope>
</reference>
<reference key="16">
    <citation type="journal article" date="2009" name="J. Virol.">
        <title>Biochemical characterization of arterivirus nonstructural protein 11 reveals the nidovirus-wide conservation of a replicative endoribonuclease.</title>
        <authorList>
            <person name="Nedialkova D.D."/>
            <person name="Ulferts R."/>
            <person name="van den Born E."/>
            <person name="Lauber C."/>
            <person name="Gorbalenya A.E."/>
            <person name="Ziebuhr J."/>
            <person name="Snijder E.J."/>
        </authorList>
    </citation>
    <scope>CATALYTIC ACTIVITY (URIDYLATE-SPECIFIC ENDORIBONUCLEASE NSP11)</scope>
    <scope>FUNCTION (URIDYLATE-SPECIFIC ENDORIBONUCLEASE NSP11)</scope>
</reference>
<reference key="17">
    <citation type="journal article" date="2012" name="J. Gen. Virol.">
        <title>Identification of porcine reproductive and respiratory syndrome virus ORF1a-encoded non-structural proteins in virus-infected cells.</title>
        <authorList>
            <person name="Li Y."/>
            <person name="Tas A."/>
            <person name="Snijder E.J."/>
            <person name="Fang Y."/>
        </authorList>
    </citation>
    <scope>PROTEOLYTIC PROCESSING OF POLYPROTEIN 1A</scope>
    <scope>PROTEOLYTIC PROCESSING OF POLYPROTEIN 1B</scope>
</reference>
<reference key="18">
    <citation type="journal article" date="2002" name="J. Biol. Chem.">
        <title>Structure of arterivirus nsp4. The smallest chymotrypsin-like proteinase with an alpha/beta C-terminal extension and alternate conformations of the oxyanion hole.</title>
        <authorList>
            <person name="Barrette-Ng I.H."/>
            <person name="Ng K.K.-S."/>
            <person name="Mark B.L."/>
            <person name="Van Aken D."/>
            <person name="Cherney M.M."/>
            <person name="Garen C."/>
            <person name="Kolodenko Y."/>
            <person name="Gorbalenya A.E."/>
            <person name="Snijder E.J."/>
            <person name="James M.N.G."/>
        </authorList>
    </citation>
    <scope>X-RAY CRYSTALLOGRAPHY (2.0 ANGSTROMS) OF 1071-1268 (NSP4)</scope>
</reference>
<reference key="19">
    <citation type="journal article" date="2014" name="Nucleic Acids Res.">
        <title>Structural basis for the regulatory function of a complex zinc-binding domain in a replicative arterivirus helicase resembling a nonsense-mediated mRNA decay helicase.</title>
        <authorList>
            <person name="Deng Z."/>
            <person name="Lehmann K.C."/>
            <person name="Li X."/>
            <person name="Feng C."/>
            <person name="Wang G."/>
            <person name="Zhang Q."/>
            <person name="Qi X."/>
            <person name="Yu L."/>
            <person name="Zhang X."/>
            <person name="Feng W."/>
            <person name="Wu W."/>
            <person name="Gong P."/>
            <person name="Tao Y."/>
            <person name="Posthuma C.C."/>
            <person name="Snijder E.J."/>
            <person name="Gorbalenya A.E."/>
            <person name="Chen Z."/>
        </authorList>
    </citation>
    <scope>X-RAY CRYSTALLOGRAPHY (2.00 ANGSTROMS) OF 2371-2772 IN COMPLEX WITH ZINC IONS</scope>
    <scope>FUNCTION</scope>
    <scope>MUTAGENESIS OF LYS-2534</scope>
</reference>
<organismHost>
    <name type="scientific">Equidae</name>
    <name type="common">horses</name>
    <dbReference type="NCBI Taxonomy" id="9788"/>
</organismHost>
<accession>P19811</accession>
<accession>Q88625</accession>
<accession>Q8QZQ5</accession>
<accession>Q91DM2</accession>
<dbReference type="EC" id="3.4.22.-" evidence="17 23"/>
<dbReference type="EC" id="3.4.19.12"/>
<dbReference type="EC" id="3.4.21.-"/>
<dbReference type="EC" id="2.7.7.48"/>
<dbReference type="EC" id="3.6.4.12" evidence="21"/>
<dbReference type="EC" id="3.6.4.13" evidence="21"/>
<dbReference type="EC" id="4.6.1.-"/>
<dbReference type="EMBL" id="X53459">
    <property type="protein sequence ID" value="CAC42774.2"/>
    <property type="molecule type" value="Genomic_RNA"/>
</dbReference>
<dbReference type="EMBL" id="X53459">
    <property type="protein sequence ID" value="CAC42775.2"/>
    <property type="molecule type" value="Genomic_RNA"/>
</dbReference>
<dbReference type="EMBL" id="X52277">
    <property type="protein sequence ID" value="CAA36520.1"/>
    <property type="molecule type" value="Genomic_RNA"/>
</dbReference>
<dbReference type="PIR" id="A39925">
    <property type="entry name" value="RRWVEV"/>
</dbReference>
<dbReference type="PDB" id="1MBM">
    <property type="method" value="X-ray"/>
    <property type="resolution" value="2.00 A"/>
    <property type="chains" value="A/B/C/D=1071-1268"/>
</dbReference>
<dbReference type="PDB" id="2L8K">
    <property type="method" value="NMR"/>
    <property type="chains" value="A=1454-1575"/>
</dbReference>
<dbReference type="PDB" id="4IUM">
    <property type="method" value="X-ray"/>
    <property type="resolution" value="1.45 A"/>
    <property type="chains" value="A=261-392"/>
</dbReference>
<dbReference type="PDB" id="4N0N">
    <property type="method" value="X-ray"/>
    <property type="resolution" value="2.00 A"/>
    <property type="chains" value="A=2371-2772"/>
</dbReference>
<dbReference type="PDB" id="4N0O">
    <property type="method" value="X-ray"/>
    <property type="resolution" value="2.65 A"/>
    <property type="chains" value="A/C/E/G=2371-2772"/>
</dbReference>
<dbReference type="PDB" id="5F17">
    <property type="method" value="X-ray"/>
    <property type="resolution" value="3.20 A"/>
    <property type="chains" value="A/B/C/D/E/F=2838-3056"/>
</dbReference>
<dbReference type="PDB" id="5HBZ">
    <property type="method" value="X-ray"/>
    <property type="resolution" value="3.10 A"/>
    <property type="chains" value="A/B/C/D/E/F=2838-3056"/>
</dbReference>
<dbReference type="PDB" id="5HC1">
    <property type="method" value="X-ray"/>
    <property type="resolution" value="3.10 A"/>
    <property type="chains" value="A/B/C/D=2838-3056"/>
</dbReference>
<dbReference type="PDBsum" id="1MBM"/>
<dbReference type="PDBsum" id="2L8K"/>
<dbReference type="PDBsum" id="4IUM"/>
<dbReference type="PDBsum" id="4N0N"/>
<dbReference type="PDBsum" id="4N0O"/>
<dbReference type="PDBsum" id="5F17"/>
<dbReference type="PDBsum" id="5HBZ"/>
<dbReference type="PDBsum" id="5HC1"/>
<dbReference type="BMRB" id="P19811"/>
<dbReference type="SMR" id="P19811"/>
<dbReference type="MEROPS" id="C33.001"/>
<dbReference type="MEROPS" id="S32.001"/>
<dbReference type="GlyCosmos" id="P19811">
    <property type="glycosylation" value="1 site, No reported glycans"/>
</dbReference>
<dbReference type="KEGG" id="vg:921339"/>
<dbReference type="BioCyc" id="MetaCyc:MONOMER-20069"/>
<dbReference type="BRENDA" id="3.4.21.114">
    <property type="organism ID" value="6985"/>
</dbReference>
<dbReference type="BRENDA" id="3.4.22.B50">
    <property type="organism ID" value="6985"/>
</dbReference>
<dbReference type="EvolutionaryTrace" id="P19811"/>
<dbReference type="Proteomes" id="UP000000353">
    <property type="component" value="Segment"/>
</dbReference>
<dbReference type="GO" id="GO:0033644">
    <property type="term" value="C:host cell membrane"/>
    <property type="evidence" value="ECO:0007669"/>
    <property type="project" value="UniProtKB-SubCell"/>
</dbReference>
<dbReference type="GO" id="GO:0042025">
    <property type="term" value="C:host cell nucleus"/>
    <property type="evidence" value="ECO:0007669"/>
    <property type="project" value="UniProtKB-SubCell"/>
</dbReference>
<dbReference type="GO" id="GO:0044220">
    <property type="term" value="C:host cell perinuclear region of cytoplasm"/>
    <property type="evidence" value="ECO:0007669"/>
    <property type="project" value="UniProtKB-SubCell"/>
</dbReference>
<dbReference type="GO" id="GO:0016020">
    <property type="term" value="C:membrane"/>
    <property type="evidence" value="ECO:0007669"/>
    <property type="project" value="UniProtKB-KW"/>
</dbReference>
<dbReference type="GO" id="GO:0005524">
    <property type="term" value="F:ATP binding"/>
    <property type="evidence" value="ECO:0007669"/>
    <property type="project" value="UniProtKB-KW"/>
</dbReference>
<dbReference type="GO" id="GO:0016887">
    <property type="term" value="F:ATP hydrolysis activity"/>
    <property type="evidence" value="ECO:0007669"/>
    <property type="project" value="RHEA"/>
</dbReference>
<dbReference type="GO" id="GO:0004843">
    <property type="term" value="F:cysteine-type deubiquitinase activity"/>
    <property type="evidence" value="ECO:0007669"/>
    <property type="project" value="UniProtKB-EC"/>
</dbReference>
<dbReference type="GO" id="GO:0004197">
    <property type="term" value="F:cysteine-type endopeptidase activity"/>
    <property type="evidence" value="ECO:0007669"/>
    <property type="project" value="InterPro"/>
</dbReference>
<dbReference type="GO" id="GO:0004519">
    <property type="term" value="F:endonuclease activity"/>
    <property type="evidence" value="ECO:0007669"/>
    <property type="project" value="UniProtKB-KW"/>
</dbReference>
<dbReference type="GO" id="GO:0016829">
    <property type="term" value="F:lyase activity"/>
    <property type="evidence" value="ECO:0007669"/>
    <property type="project" value="UniProtKB-KW"/>
</dbReference>
<dbReference type="GO" id="GO:0003723">
    <property type="term" value="F:RNA binding"/>
    <property type="evidence" value="ECO:0007669"/>
    <property type="project" value="InterPro"/>
</dbReference>
<dbReference type="GO" id="GO:0003724">
    <property type="term" value="F:RNA helicase activity"/>
    <property type="evidence" value="ECO:0007669"/>
    <property type="project" value="UniProtKB-EC"/>
</dbReference>
<dbReference type="GO" id="GO:0004540">
    <property type="term" value="F:RNA nuclease activity"/>
    <property type="evidence" value="ECO:0007669"/>
    <property type="project" value="UniProtKB-ARBA"/>
</dbReference>
<dbReference type="GO" id="GO:0003968">
    <property type="term" value="F:RNA-directed RNA polymerase activity"/>
    <property type="evidence" value="ECO:0007669"/>
    <property type="project" value="UniProtKB-KW"/>
</dbReference>
<dbReference type="GO" id="GO:0004252">
    <property type="term" value="F:serine-type endopeptidase activity"/>
    <property type="evidence" value="ECO:0007669"/>
    <property type="project" value="InterPro"/>
</dbReference>
<dbReference type="GO" id="GO:0070008">
    <property type="term" value="F:serine-type exopeptidase activity"/>
    <property type="evidence" value="ECO:0007669"/>
    <property type="project" value="InterPro"/>
</dbReference>
<dbReference type="GO" id="GO:0008270">
    <property type="term" value="F:zinc ion binding"/>
    <property type="evidence" value="ECO:0007669"/>
    <property type="project" value="UniProtKB-KW"/>
</dbReference>
<dbReference type="GO" id="GO:0006351">
    <property type="term" value="P:DNA-templated transcription"/>
    <property type="evidence" value="ECO:0007669"/>
    <property type="project" value="InterPro"/>
</dbReference>
<dbReference type="GO" id="GO:0006508">
    <property type="term" value="P:proteolysis"/>
    <property type="evidence" value="ECO:0007669"/>
    <property type="project" value="UniProtKB-KW"/>
</dbReference>
<dbReference type="GO" id="GO:0039648">
    <property type="term" value="P:symbiont-mediated perturbation of host ubiquitin-like protein modification"/>
    <property type="evidence" value="ECO:0007669"/>
    <property type="project" value="UniProtKB-KW"/>
</dbReference>
<dbReference type="GO" id="GO:0039579">
    <property type="term" value="P:symbiont-mediated suppression of host ISG15-protein conjugation"/>
    <property type="evidence" value="ECO:0007669"/>
    <property type="project" value="UniProtKB-KW"/>
</dbReference>
<dbReference type="GO" id="GO:0039502">
    <property type="term" value="P:symbiont-mediated suppression of host type I interferon-mediated signaling pathway"/>
    <property type="evidence" value="ECO:0007669"/>
    <property type="project" value="UniProtKB-KW"/>
</dbReference>
<dbReference type="GO" id="GO:0019082">
    <property type="term" value="P:viral protein processing"/>
    <property type="evidence" value="ECO:0007669"/>
    <property type="project" value="InterPro"/>
</dbReference>
<dbReference type="GO" id="GO:0039694">
    <property type="term" value="P:viral RNA genome replication"/>
    <property type="evidence" value="ECO:0007669"/>
    <property type="project" value="InterPro"/>
</dbReference>
<dbReference type="GO" id="GO:0075523">
    <property type="term" value="P:viral translational frameshifting"/>
    <property type="evidence" value="ECO:0007669"/>
    <property type="project" value="UniProtKB-KW"/>
</dbReference>
<dbReference type="CDD" id="cd21406">
    <property type="entry name" value="1B_nv_SF1_Hel-like"/>
    <property type="match status" value="1"/>
</dbReference>
<dbReference type="CDD" id="cd23189">
    <property type="entry name" value="Arteriviridae_RdRp"/>
    <property type="match status" value="1"/>
</dbReference>
<dbReference type="CDD" id="cd22528">
    <property type="entry name" value="av_Nsp3_ER-remodelling"/>
    <property type="match status" value="1"/>
</dbReference>
<dbReference type="CDD" id="cd17937">
    <property type="entry name" value="DEXXYc_viral_SF1-N"/>
    <property type="match status" value="1"/>
</dbReference>
<dbReference type="CDD" id="cd21160">
    <property type="entry name" value="NendoU_av_Nsp11-like"/>
    <property type="match status" value="1"/>
</dbReference>
<dbReference type="CDD" id="cd21166">
    <property type="entry name" value="NTD_av_Nsp11-like"/>
    <property type="match status" value="1"/>
</dbReference>
<dbReference type="CDD" id="cd18786">
    <property type="entry name" value="SF1_C"/>
    <property type="match status" value="1"/>
</dbReference>
<dbReference type="CDD" id="cd21405">
    <property type="entry name" value="ZBD_av_Nsp10-like"/>
    <property type="match status" value="1"/>
</dbReference>
<dbReference type="Gene3D" id="3.30.70.270">
    <property type="match status" value="1"/>
</dbReference>
<dbReference type="Gene3D" id="3.90.70.160">
    <property type="match status" value="1"/>
</dbReference>
<dbReference type="Gene3D" id="3.30.1330.220">
    <property type="entry name" value="Arterivirus nonstructural protein 7 alpha"/>
    <property type="match status" value="1"/>
</dbReference>
<dbReference type="Gene3D" id="3.30.40.20">
    <property type="entry name" value="Chymotrypsin-like serine protease, domain 3"/>
    <property type="match status" value="1"/>
</dbReference>
<dbReference type="Gene3D" id="2.40.10.10">
    <property type="entry name" value="Trypsin-like serine proteases"/>
    <property type="match status" value="2"/>
</dbReference>
<dbReference type="InterPro" id="IPR027351">
    <property type="entry name" value="(+)RNA_virus_helicase_core_dom"/>
</dbReference>
<dbReference type="InterPro" id="IPR031932">
    <property type="entry name" value="Arteri_nsp7a"/>
</dbReference>
<dbReference type="InterPro" id="IPR038451">
    <property type="entry name" value="Arteri_nsp7a_sf"/>
</dbReference>
<dbReference type="InterPro" id="IPR008743">
    <property type="entry name" value="Arterivirus_Nsp2_C33"/>
</dbReference>
<dbReference type="InterPro" id="IPR023338">
    <property type="entry name" value="Arterivirus_NSP4_peptidase"/>
</dbReference>
<dbReference type="InterPro" id="IPR046440">
    <property type="entry name" value="AV_NSP11N_COV_NSP15M"/>
</dbReference>
<dbReference type="InterPro" id="IPR008741">
    <property type="entry name" value="AV_PCPalpha"/>
</dbReference>
<dbReference type="InterPro" id="IPR025773">
    <property type="entry name" value="AV_PCPbeta"/>
</dbReference>
<dbReference type="InterPro" id="IPR023183">
    <property type="entry name" value="Chymotrypsin-like_C"/>
</dbReference>
<dbReference type="InterPro" id="IPR043502">
    <property type="entry name" value="DNA/RNA_pol_sf"/>
</dbReference>
<dbReference type="InterPro" id="IPR022230">
    <property type="entry name" value="DUF3756"/>
</dbReference>
<dbReference type="InterPro" id="IPR029323">
    <property type="entry name" value="EAV_nsp1"/>
</dbReference>
<dbReference type="InterPro" id="IPR008760">
    <property type="entry name" value="EAV_peptidase_S32"/>
</dbReference>
<dbReference type="InterPro" id="IPR037227">
    <property type="entry name" value="EndoU-like"/>
</dbReference>
<dbReference type="InterPro" id="IPR043609">
    <property type="entry name" value="NendoU_nidovirus"/>
</dbReference>
<dbReference type="InterPro" id="IPR044863">
    <property type="entry name" value="NIRAN"/>
</dbReference>
<dbReference type="InterPro" id="IPR027355">
    <property type="entry name" value="NSP10_Av_ZBD"/>
</dbReference>
<dbReference type="InterPro" id="IPR044320">
    <property type="entry name" value="NSP11_Av_N"/>
</dbReference>
<dbReference type="InterPro" id="IPR044314">
    <property type="entry name" value="NSP11_NendoU_Av"/>
</dbReference>
<dbReference type="InterPro" id="IPR032786">
    <property type="entry name" value="NSP2_TM_arteriviridae"/>
</dbReference>
<dbReference type="InterPro" id="IPR027417">
    <property type="entry name" value="P-loop_NTPase"/>
</dbReference>
<dbReference type="InterPro" id="IPR009003">
    <property type="entry name" value="Peptidase_S1_PA"/>
</dbReference>
<dbReference type="InterPro" id="IPR043504">
    <property type="entry name" value="Peptidase_S1_PA_chymotrypsin"/>
</dbReference>
<dbReference type="InterPro" id="IPR041053">
    <property type="entry name" value="Rep_1B"/>
</dbReference>
<dbReference type="InterPro" id="IPR043128">
    <property type="entry name" value="Rev_trsase/Diguanyl_cyclase"/>
</dbReference>
<dbReference type="InterPro" id="IPR001205">
    <property type="entry name" value="RNA-dir_pol_C"/>
</dbReference>
<dbReference type="InterPro" id="IPR007094">
    <property type="entry name" value="RNA-dir_pol_PSvirus"/>
</dbReference>
<dbReference type="InterPro" id="IPR041361">
    <property type="entry name" value="Znf-RING_13"/>
</dbReference>
<dbReference type="Pfam" id="PF16749">
    <property type="entry name" value="Arteri_nsp7a"/>
    <property type="match status" value="1"/>
</dbReference>
<dbReference type="Pfam" id="PF19215">
    <property type="entry name" value="CoV_NSP15_C"/>
    <property type="match status" value="1"/>
</dbReference>
<dbReference type="Pfam" id="PF12581">
    <property type="entry name" value="DUF3756"/>
    <property type="match status" value="1"/>
</dbReference>
<dbReference type="Pfam" id="PF14754">
    <property type="entry name" value="IFR3_antag"/>
    <property type="match status" value="1"/>
</dbReference>
<dbReference type="Pfam" id="PF14755">
    <property type="entry name" value="Nsp2_AV"/>
    <property type="match status" value="1"/>
</dbReference>
<dbReference type="Pfam" id="PF05412">
    <property type="entry name" value="Peptidase_C33"/>
    <property type="match status" value="1"/>
</dbReference>
<dbReference type="Pfam" id="PF05579">
    <property type="entry name" value="Peptidase_S32"/>
    <property type="match status" value="1"/>
</dbReference>
<dbReference type="Pfam" id="PF22049">
    <property type="entry name" value="PRRSV-NSP11_N"/>
    <property type="match status" value="1"/>
</dbReference>
<dbReference type="Pfam" id="PF00680">
    <property type="entry name" value="RdRP_1"/>
    <property type="match status" value="1"/>
</dbReference>
<dbReference type="Pfam" id="PF17873">
    <property type="entry name" value="Rep_1B"/>
    <property type="match status" value="1"/>
</dbReference>
<dbReference type="Pfam" id="PF01443">
    <property type="entry name" value="Viral_helicase1"/>
    <property type="match status" value="1"/>
</dbReference>
<dbReference type="Pfam" id="PF17977">
    <property type="entry name" value="zf-RING_13"/>
    <property type="match status" value="1"/>
</dbReference>
<dbReference type="SUPFAM" id="SSF56672">
    <property type="entry name" value="DNA/RNA polymerases"/>
    <property type="match status" value="1"/>
</dbReference>
<dbReference type="SUPFAM" id="SSF142877">
    <property type="entry name" value="EndoU-like"/>
    <property type="match status" value="1"/>
</dbReference>
<dbReference type="SUPFAM" id="SSF52540">
    <property type="entry name" value="P-loop containing nucleoside triphosphate hydrolases"/>
    <property type="match status" value="1"/>
</dbReference>
<dbReference type="SUPFAM" id="SSF50494">
    <property type="entry name" value="Trypsin-like serine proteases"/>
    <property type="match status" value="1"/>
</dbReference>
<dbReference type="PROSITE" id="PS51538">
    <property type="entry name" value="AV_CP"/>
    <property type="match status" value="1"/>
</dbReference>
<dbReference type="PROSITE" id="PS51961">
    <property type="entry name" value="AV_NSP11N_COV_NSP15M"/>
    <property type="match status" value="1"/>
</dbReference>
<dbReference type="PROSITE" id="PS51493">
    <property type="entry name" value="AV_NSP4_PRO"/>
    <property type="match status" value="1"/>
</dbReference>
<dbReference type="PROSITE" id="PS51539">
    <property type="entry name" value="AV_PCP_ALPHA"/>
    <property type="match status" value="1"/>
</dbReference>
<dbReference type="PROSITE" id="PS51540">
    <property type="entry name" value="AV_PCP_BETA"/>
    <property type="match status" value="1"/>
</dbReference>
<dbReference type="PROSITE" id="PS51652">
    <property type="entry name" value="AV_ZBD"/>
    <property type="match status" value="1"/>
</dbReference>
<dbReference type="PROSITE" id="PS51958">
    <property type="entry name" value="NENDOU"/>
    <property type="match status" value="1"/>
</dbReference>
<dbReference type="PROSITE" id="PS51947">
    <property type="entry name" value="NIRAN"/>
    <property type="match status" value="1"/>
</dbReference>
<dbReference type="PROSITE" id="PS51657">
    <property type="entry name" value="PSRV_HELICASE"/>
    <property type="match status" value="1"/>
</dbReference>
<dbReference type="PROSITE" id="PS50507">
    <property type="entry name" value="RDRP_SSRNA_POS"/>
    <property type="match status" value="1"/>
</dbReference>
<protein>
    <recommendedName>
        <fullName>Replicase polyprotein 1ab</fullName>
    </recommendedName>
    <alternativeName>
        <fullName>ORF1ab polyprotein</fullName>
    </alternativeName>
    <component>
        <recommendedName>
            <fullName>Nsp1 papain-like cysteine proteinase</fullName>
            <shortName>PCP</shortName>
            <ecNumber evidence="17 23">3.4.22.-</ecNumber>
        </recommendedName>
    </component>
    <component>
        <recommendedName>
            <fullName>Nsp2 cysteine proteinase</fullName>
            <ecNumber>3.4.19.12</ecNumber>
            <ecNumber>3.4.22.-</ecNumber>
        </recommendedName>
        <alternativeName>
            <fullName>CP2</fullName>
            <shortName>CP</shortName>
        </alternativeName>
    </component>
    <component>
        <recommendedName>
            <fullName>Non-structural protein 3</fullName>
            <shortName>Nsp3</shortName>
        </recommendedName>
    </component>
    <component>
        <recommendedName>
            <fullName>3C-like serine proteinase</fullName>
            <shortName>3CLSP</shortName>
            <ecNumber>3.4.21.-</ecNumber>
        </recommendedName>
        <alternativeName>
            <fullName>Nsp4</fullName>
        </alternativeName>
    </component>
    <component>
        <recommendedName>
            <fullName>Non-structural protein 5-6-7</fullName>
            <shortName>Nsp5-6-7</shortName>
        </recommendedName>
    </component>
    <component>
        <recommendedName>
            <fullName>Non-structural protein 5</fullName>
            <shortName>Nsp5</shortName>
        </recommendedName>
    </component>
    <component>
        <recommendedName>
            <fullName>Non-structural protein 6</fullName>
            <shortName>Nsp6</shortName>
        </recommendedName>
    </component>
    <component>
        <recommendedName>
            <fullName>Non-structural protein 7-alpha</fullName>
            <shortName>Nsp7-alpha</shortName>
        </recommendedName>
    </component>
    <component>
        <recommendedName>
            <fullName>Non-structural protein 7-beta</fullName>
            <shortName>Nsp7-beta</shortName>
        </recommendedName>
    </component>
    <component>
        <recommendedName>
            <fullName>Non-structural protein 8</fullName>
            <shortName>Nsp8</shortName>
        </recommendedName>
    </component>
    <component>
        <recommendedName>
            <fullName>RNA-directed RNA polymerase</fullName>
            <shortName>Pol</shortName>
            <shortName>RdRp</shortName>
            <ecNumber>2.7.7.48</ecNumber>
        </recommendedName>
        <alternativeName>
            <fullName>Nsp9</fullName>
        </alternativeName>
    </component>
    <component>
        <recommendedName>
            <fullName evidence="27 28">Helicase</fullName>
            <shortName>Hel</shortName>
            <ecNumber evidence="21">3.6.4.12</ecNumber>
            <ecNumber evidence="21">3.6.4.13</ecNumber>
        </recommendedName>
        <alternativeName>
            <fullName>Nsp10</fullName>
        </alternativeName>
    </component>
    <component>
        <recommendedName>
            <fullName>Uridylate-specific endoribonuclease nsp11</fullName>
            <ecNumber>4.6.1.-</ecNumber>
        </recommendedName>
        <alternativeName>
            <fullName>Non-structural protein 11</fullName>
            <shortName>Nsp11</shortName>
        </alternativeName>
    </component>
    <component>
        <recommendedName>
            <fullName>Non-structural protein 12</fullName>
            <shortName>Nsp12</shortName>
        </recommendedName>
    </component>
</protein>
<evidence type="ECO:0000250" key="1"/>
<evidence type="ECO:0000250" key="2">
    <source>
        <dbReference type="UniProtKB" id="P0C6X7"/>
    </source>
</evidence>
<evidence type="ECO:0000255" key="3"/>
<evidence type="ECO:0000255" key="4">
    <source>
        <dbReference type="PROSITE-ProRule" id="PRU00539"/>
    </source>
</evidence>
<evidence type="ECO:0000255" key="5">
    <source>
        <dbReference type="PROSITE-ProRule" id="PRU00826"/>
    </source>
</evidence>
<evidence type="ECO:0000255" key="6">
    <source>
        <dbReference type="PROSITE-ProRule" id="PRU00871"/>
    </source>
</evidence>
<evidence type="ECO:0000255" key="7">
    <source>
        <dbReference type="PROSITE-ProRule" id="PRU00872"/>
    </source>
</evidence>
<evidence type="ECO:0000255" key="8">
    <source>
        <dbReference type="PROSITE-ProRule" id="PRU00873"/>
    </source>
</evidence>
<evidence type="ECO:0000255" key="9">
    <source>
        <dbReference type="PROSITE-ProRule" id="PRU00985"/>
    </source>
</evidence>
<evidence type="ECO:0000255" key="10">
    <source>
        <dbReference type="PROSITE-ProRule" id="PRU01292"/>
    </source>
</evidence>
<evidence type="ECO:0000255" key="11">
    <source>
        <dbReference type="PROSITE-ProRule" id="PRU01303"/>
    </source>
</evidence>
<evidence type="ECO:0000255" key="12">
    <source>
        <dbReference type="PROSITE-ProRule" id="PRU01306"/>
    </source>
</evidence>
<evidence type="ECO:0000256" key="13">
    <source>
        <dbReference type="SAM" id="MobiDB-lite"/>
    </source>
</evidence>
<evidence type="ECO:0000269" key="14">
    <source>
    </source>
</evidence>
<evidence type="ECO:0000269" key="15">
    <source>
    </source>
</evidence>
<evidence type="ECO:0000269" key="16">
    <source>
    </source>
</evidence>
<evidence type="ECO:0000269" key="17">
    <source>
    </source>
</evidence>
<evidence type="ECO:0000269" key="18">
    <source>
    </source>
</evidence>
<evidence type="ECO:0000269" key="19">
    <source>
    </source>
</evidence>
<evidence type="ECO:0000269" key="20">
    <source>
    </source>
</evidence>
<evidence type="ECO:0000269" key="21">
    <source>
    </source>
</evidence>
<evidence type="ECO:0000269" key="22">
    <source>
    </source>
</evidence>
<evidence type="ECO:0000269" key="23">
    <source>
    </source>
</evidence>
<evidence type="ECO:0000269" key="24">
    <source>
    </source>
</evidence>
<evidence type="ECO:0000269" key="25">
    <source>
    </source>
</evidence>
<evidence type="ECO:0000269" key="26">
    <source>
    </source>
</evidence>
<evidence type="ECO:0000303" key="27">
    <source>
    </source>
</evidence>
<evidence type="ECO:0000303" key="28">
    <source>
    </source>
</evidence>
<evidence type="ECO:0000305" key="29"/>
<evidence type="ECO:0007744" key="30">
    <source>
        <dbReference type="PDB" id="4IUM"/>
    </source>
</evidence>
<evidence type="ECO:0007744" key="31">
    <source>
        <dbReference type="PDB" id="4N0N"/>
    </source>
</evidence>
<evidence type="ECO:0007744" key="32">
    <source>
        <dbReference type="PDB" id="4N0O"/>
    </source>
</evidence>
<evidence type="ECO:0007829" key="33">
    <source>
        <dbReference type="PDB" id="1MBM"/>
    </source>
</evidence>
<evidence type="ECO:0007829" key="34">
    <source>
        <dbReference type="PDB" id="2L8K"/>
    </source>
</evidence>
<evidence type="ECO:0007829" key="35">
    <source>
        <dbReference type="PDB" id="4IUM"/>
    </source>
</evidence>
<evidence type="ECO:0007829" key="36">
    <source>
        <dbReference type="PDB" id="4N0N"/>
    </source>
</evidence>
<evidence type="ECO:0007829" key="37">
    <source>
        <dbReference type="PDB" id="4N0O"/>
    </source>
</evidence>
<evidence type="ECO:0007829" key="38">
    <source>
        <dbReference type="PDB" id="5HBZ"/>
    </source>
</evidence>
<evidence type="ECO:0007829" key="39">
    <source>
        <dbReference type="PDB" id="5HC1"/>
    </source>
</evidence>
<comment type="function">
    <text evidence="18">The replicase polyprotein 1ab is a multifunctional protein: it contains the activities necessary for the transcription of negative stranded RNA, leader RNA, subgenomic mRNAs and progeny virion RNA as well as proteinases responsible for the cleavage of the polyprotein into functional products.</text>
</comment>
<comment type="function">
    <text evidence="15">Nsp1 is essential for viral subgenomic mRNA synthesis.</text>
</comment>
<comment type="function">
    <text evidence="18">Nsp2 cysteine proteinase which cleaves the nsp2/nsp3 site in the polyprotein. Also displays deubiquitinating and deISGylase activities. The deubiquitinating activity cleaves both ubiquitinated and ISGylated products and may therefore regulate ubiquitin and ISG15 dependent host innate immunity.</text>
</comment>
<comment type="function">
    <text evidence="18">The 3C-like serine proteinase chain is responsible for the majority of cleavages as it cleaves the C-terminus of the polyprotein.</text>
</comment>
<comment type="function">
    <text evidence="14 21">The helicase chain, which contains a zinc finger structure, displays RNA and DNA duplex-unwinding activities with 5' to 3' polarity.</text>
</comment>
<comment type="function">
    <molecule>Uridylate-specific endoribonuclease nsp11</molecule>
    <text evidence="2 19">Plays a role in viral transcription/replication and prevents the simultaneous activation of host cell dsRNA sensors, such as MDA5/IFIH1, OAS, and PKR (By similarity). Acts by degrading the 5'-polyuridines generated during replication of the poly(A) region of viral genomic and subgenomic RNAs. Catalyzes a two-step reaction in which a 2'3'-cyclic phosphate (2'3'-cP) is first generated by 2'-O transesterification, which is then hydrolyzed to a 3'-phosphate (3'-P) (PubMed:19297500). If not degraded, poly(U) RNA would hybridize with poly(A) RNA tails and activate host dsRNA sensors (By similarity).</text>
</comment>
<comment type="catalytic activity">
    <reaction evidence="4">
        <text>RNA(n) + a ribonucleoside 5'-triphosphate = RNA(n+1) + diphosphate</text>
        <dbReference type="Rhea" id="RHEA:21248"/>
        <dbReference type="Rhea" id="RHEA-COMP:14527"/>
        <dbReference type="Rhea" id="RHEA-COMP:17342"/>
        <dbReference type="ChEBI" id="CHEBI:33019"/>
        <dbReference type="ChEBI" id="CHEBI:61557"/>
        <dbReference type="ChEBI" id="CHEBI:140395"/>
        <dbReference type="EC" id="2.7.7.48"/>
    </reaction>
</comment>
<comment type="catalytic activity">
    <reaction evidence="21">
        <text>ATP + H2O = ADP + phosphate + H(+)</text>
        <dbReference type="Rhea" id="RHEA:13065"/>
        <dbReference type="ChEBI" id="CHEBI:15377"/>
        <dbReference type="ChEBI" id="CHEBI:15378"/>
        <dbReference type="ChEBI" id="CHEBI:30616"/>
        <dbReference type="ChEBI" id="CHEBI:43474"/>
        <dbReference type="ChEBI" id="CHEBI:456216"/>
        <dbReference type="EC" id="3.6.4.12"/>
    </reaction>
</comment>
<comment type="catalytic activity">
    <reaction evidence="21">
        <text>ATP + H2O = ADP + phosphate + H(+)</text>
        <dbReference type="Rhea" id="RHEA:13065"/>
        <dbReference type="ChEBI" id="CHEBI:15377"/>
        <dbReference type="ChEBI" id="CHEBI:15378"/>
        <dbReference type="ChEBI" id="CHEBI:30616"/>
        <dbReference type="ChEBI" id="CHEBI:43474"/>
        <dbReference type="ChEBI" id="CHEBI:456216"/>
        <dbReference type="EC" id="3.6.4.13"/>
    </reaction>
</comment>
<comment type="catalytic activity">
    <reaction>
        <text>Thiol-dependent hydrolysis of ester, thioester, amide, peptide and isopeptide bonds formed by the C-terminal Gly of ubiquitin (a 76-residue protein attached to proteins as an intracellular targeting signal).</text>
        <dbReference type="EC" id="3.4.19.12"/>
    </reaction>
</comment>
<comment type="catalytic activity">
    <molecule>Uridylate-specific endoribonuclease nsp11</molecule>
    <reaction evidence="19">
        <text>uridylyl-uridylyl-ribonucleotide-RNA = a 3'-end uridylyl-2',3'-cyclophospho-uridine-RNA + a 5'-end dephospho-ribonucleoside-RNA</text>
        <dbReference type="Rhea" id="RHEA:67732"/>
        <dbReference type="Rhea" id="RHEA-COMP:13936"/>
        <dbReference type="Rhea" id="RHEA-COMP:17334"/>
        <dbReference type="Rhea" id="RHEA-COMP:17335"/>
        <dbReference type="ChEBI" id="CHEBI:138284"/>
        <dbReference type="ChEBI" id="CHEBI:173079"/>
        <dbReference type="ChEBI" id="CHEBI:173080"/>
    </reaction>
</comment>
<comment type="subunit">
    <text evidence="16">Nsp1 interacts with cellular transcription cofactor SND1/p100.</text>
</comment>
<comment type="interaction">
    <interactant intactId="EBI-27070211">
        <id>P19811</id>
    </interactant>
    <interactant intactId="EBI-27070280">
        <id>PRO_0000036626</id>
        <label>rep</label>
        <dbReference type="UniProtKB" id="P19811"/>
    </interactant>
    <organismsDiffer>false</organismsDiffer>
    <experiments>4</experiments>
</comment>
<comment type="subcellular location">
    <molecule>Nsp1 papain-like cysteine proteinase</molecule>
    <subcellularLocation>
        <location>Host nucleus</location>
    </subcellularLocation>
    <subcellularLocation>
        <location>Host cytoplasm</location>
    </subcellularLocation>
</comment>
<comment type="subcellular location">
    <molecule>Nsp2 cysteine proteinase</molecule>
    <subcellularLocation>
        <location evidence="29">Host membrane</location>
        <topology evidence="29">Multi-pass membrane protein</topology>
    </subcellularLocation>
</comment>
<comment type="subcellular location">
    <molecule>Non-structural protein 3</molecule>
    <subcellularLocation>
        <location evidence="29">Host membrane</location>
        <topology evidence="29">Multi-pass membrane protein</topology>
    </subcellularLocation>
</comment>
<comment type="subcellular location">
    <molecule>Non-structural protein 5-6-7</molecule>
    <subcellularLocation>
        <location evidence="29">Host membrane</location>
        <topology evidence="29">Multi-pass membrane protein</topology>
    </subcellularLocation>
</comment>
<comment type="subcellular location">
    <molecule>3C-like serine proteinase</molecule>
    <subcellularLocation>
        <location evidence="29">Host cytoplasm</location>
    </subcellularLocation>
</comment>
<comment type="subcellular location">
    <molecule>RNA-directed RNA polymerase</molecule>
    <subcellularLocation>
        <location evidence="29">Host cytoplasm</location>
        <location evidence="29">Host perinuclear region</location>
    </subcellularLocation>
</comment>
<comment type="subcellular location">
    <molecule>Helicase</molecule>
    <subcellularLocation>
        <location evidence="29">Host cytoplasm</location>
        <location evidence="29">Host perinuclear region</location>
    </subcellularLocation>
</comment>
<comment type="alternative products">
    <event type="ribosomal frameshifting"/>
    <isoform>
        <id>P19811-1</id>
        <name>Replicase polyprotein 1ab</name>
        <name>pp1ab</name>
        <sequence type="displayed"/>
    </isoform>
    <isoform>
        <id>P19811-2</id>
        <name>Replicase polyprotein 1a</name>
        <name>pp1a</name>
        <name>ORF1a polyprotein</name>
        <sequence type="described" ref="VSP_032887"/>
    </isoform>
</comment>
<comment type="domain">
    <text>The hydrophobic domains (HD) could mediate the membrane association of the replication complex and thereby alter the architecture of the host cell membrane.</text>
</comment>
<comment type="domain">
    <text evidence="29">The OTU-like region is responsible for the deubiquitinating and deISGylation activities of Nsp2.</text>
</comment>
<comment type="PTM">
    <text evidence="17 20 23 25 26">Specific enzymatic cleavages in vivo by its own proteases yield mature proteins. There are two alternative pathways for processing. Either nsp4-5 is cleaved, which represents the major pathway or the nsp5-6 and nsp6-7 are processed, which represents the minor pathway. The major pathway occurs when nsp2 acts as a cofactor for nsp4.</text>
</comment>
<comment type="miscellaneous">
    <text>Nsp1 contains an inactivated papain-like cysteine proteinase domain due to a Lys instead of a Cys in position 73.</text>
</comment>
<comment type="miscellaneous">
    <molecule>Isoform Replicase polyprotein 1ab</molecule>
    <text>Produced by -1 ribosomal frameshifting at the 1a-1b genes boundary.</text>
</comment>
<comment type="miscellaneous">
    <molecule>Isoform Replicase polyprotein 1a</molecule>
    <text evidence="29">Produced by conventional translation.</text>
</comment>
<comment type="similarity">
    <text evidence="29">Belongs to the arteriviridae polyprotein family.</text>
</comment>
<gene>
    <name type="primary">rep</name>
    <name type="ORF">1a-1b</name>
</gene>
<proteinExistence type="evidence at protein level"/>
<name>RPOA_EAVBU</name>
<keyword id="KW-0002">3D-structure</keyword>
<keyword id="KW-0067">ATP-binding</keyword>
<keyword id="KW-0255">Endonuclease</keyword>
<keyword id="KW-0325">Glycoprotein</keyword>
<keyword id="KW-0347">Helicase</keyword>
<keyword id="KW-1035">Host cytoplasm</keyword>
<keyword id="KW-1043">Host membrane</keyword>
<keyword id="KW-1048">Host nucleus</keyword>
<keyword id="KW-0945">Host-virus interaction</keyword>
<keyword id="KW-0378">Hydrolase</keyword>
<keyword id="KW-1090">Inhibition of host innate immune response by virus</keyword>
<keyword id="KW-1114">Inhibition of host interferon signaling pathway by virus</keyword>
<keyword id="KW-1095">Inhibition of host ISG15 by virus</keyword>
<keyword id="KW-0922">Interferon antiviral system evasion</keyword>
<keyword id="KW-0456">Lyase</keyword>
<keyword id="KW-0472">Membrane</keyword>
<keyword id="KW-0479">Metal-binding</keyword>
<keyword id="KW-1127">Modulation of host ubiquitin pathway by viral deubiquitinase</keyword>
<keyword id="KW-1130">Modulation of host ubiquitin pathway by virus</keyword>
<keyword id="KW-0511">Multifunctional enzyme</keyword>
<keyword id="KW-0540">Nuclease</keyword>
<keyword id="KW-0547">Nucleotide-binding</keyword>
<keyword id="KW-0548">Nucleotidyltransferase</keyword>
<keyword id="KW-0645">Protease</keyword>
<keyword id="KW-1185">Reference proteome</keyword>
<keyword id="KW-0688">Ribosomal frameshifting</keyword>
<keyword id="KW-0696">RNA-directed RNA polymerase</keyword>
<keyword id="KW-0720">Serine protease</keyword>
<keyword id="KW-0788">Thiol protease</keyword>
<keyword id="KW-0808">Transferase</keyword>
<keyword id="KW-0812">Transmembrane</keyword>
<keyword id="KW-1133">Transmembrane helix</keyword>
<keyword id="KW-0899">Viral immunoevasion</keyword>
<keyword id="KW-0693">Viral RNA replication</keyword>
<keyword id="KW-0862">Zinc</keyword>
<keyword id="KW-0863">Zinc-finger</keyword>
<organism>
    <name type="scientific">Equine arteritis virus (strain Bucyrus)</name>
    <name type="common">EAV</name>
    <dbReference type="NCBI Taxonomy" id="299386"/>
    <lineage>
        <taxon>Viruses</taxon>
        <taxon>Riboviria</taxon>
        <taxon>Orthornavirae</taxon>
        <taxon>Pisuviricota</taxon>
        <taxon>Pisoniviricetes</taxon>
        <taxon>Nidovirales</taxon>
        <taxon>Arnidovirineae</taxon>
        <taxon>Arteriviridae</taxon>
        <taxon>Equarterivirinae</taxon>
        <taxon>Alphaarterivirus</taxon>
        <taxon>Alphaarterivirus equid</taxon>
    </lineage>
</organism>
<feature type="chain" id="PRO_0000036619" description="Replicase polyprotein 1ab">
    <location>
        <begin position="1"/>
        <end position="3175"/>
    </location>
</feature>
<feature type="chain" id="PRO_0000036621" description="Nsp1 papain-like cysteine proteinase">
    <location>
        <begin position="1"/>
        <end position="260"/>
    </location>
</feature>
<feature type="chain" id="PRO_0000036622" description="Nsp2 cysteine proteinase">
    <location>
        <begin position="261"/>
        <end position="831"/>
    </location>
</feature>
<feature type="chain" id="PRO_0000036623" description="Non-structural protein 3">
    <location>
        <begin position="832"/>
        <end position="1064"/>
    </location>
</feature>
<feature type="chain" id="PRO_0000036624" description="3C-like serine proteinase">
    <location>
        <begin position="1065"/>
        <end position="1268"/>
    </location>
</feature>
<feature type="chain" id="PRO_0000036625" description="Non-structural protein 5-6-7">
    <location>
        <begin position="1269"/>
        <end position="1677"/>
    </location>
</feature>
<feature type="chain" id="PRO_0000423106" description="Non-structural protein 5">
    <location>
        <begin position="1269"/>
        <end position="1430"/>
    </location>
</feature>
<feature type="chain" id="PRO_0000423107" description="Non-structural protein 6">
    <location>
        <begin position="1431"/>
        <end position="1452"/>
    </location>
</feature>
<feature type="chain" id="PRO_0000423108" description="Non-structural protein 7-alpha">
    <location>
        <begin position="1453"/>
        <end position="1575"/>
    </location>
</feature>
<feature type="chain" id="PRO_0000423109" description="Non-structural protein 7-beta">
    <location>
        <begin position="1576"/>
        <end position="1677"/>
    </location>
</feature>
<feature type="chain" id="PRO_0000036626" description="RNA-directed RNA polymerase">
    <location>
        <begin position="1678"/>
        <end position="2370"/>
    </location>
</feature>
<feature type="chain" id="PRO_0000036627" description="Non-structural protein 8">
    <location>
        <begin position="1678"/>
        <end position="1727"/>
    </location>
</feature>
<feature type="chain" id="PRO_0000036628" description="Helicase">
    <location>
        <begin position="2371"/>
        <end position="2837"/>
    </location>
</feature>
<feature type="chain" id="PRO_0000036629" description="Uridylate-specific endoribonuclease nsp11">
    <location>
        <begin position="2838"/>
        <end position="3056"/>
    </location>
</feature>
<feature type="chain" id="PRO_0000036630" description="Non-structural protein 12">
    <location>
        <begin position="3057"/>
        <end position="3175"/>
    </location>
</feature>
<feature type="transmembrane region" description="Helical" evidence="3">
    <location>
        <begin position="530"/>
        <end position="550"/>
    </location>
</feature>
<feature type="transmembrane region" description="Helical" evidence="3">
    <location>
        <begin position="551"/>
        <end position="571"/>
    </location>
</feature>
<feature type="transmembrane region" description="Helical" evidence="3">
    <location>
        <begin position="625"/>
        <end position="645"/>
    </location>
</feature>
<feature type="transmembrane region" description="Helical" evidence="3">
    <location>
        <begin position="829"/>
        <end position="849"/>
    </location>
</feature>
<feature type="transmembrane region" description="Helical" evidence="3">
    <location>
        <begin position="903"/>
        <end position="923"/>
    </location>
</feature>
<feature type="transmembrane region" description="Helical" evidence="3">
    <location>
        <begin position="935"/>
        <end position="955"/>
    </location>
</feature>
<feature type="transmembrane region" description="Helical" evidence="3">
    <location>
        <begin position="977"/>
        <end position="997"/>
    </location>
</feature>
<feature type="transmembrane region" description="Helical" evidence="3">
    <location>
        <begin position="1291"/>
        <end position="1311"/>
    </location>
</feature>
<feature type="transmembrane region" description="Helical" evidence="3">
    <location>
        <begin position="1333"/>
        <end position="1353"/>
    </location>
</feature>
<feature type="transmembrane region" description="Helical" evidence="3">
    <location>
        <begin position="1355"/>
        <end position="1375"/>
    </location>
</feature>
<feature type="transmembrane region" description="Helical" evidence="3">
    <location>
        <begin position="1385"/>
        <end position="1405"/>
    </location>
</feature>
<feature type="domain" description="Peptidase C31" evidence="7">
    <location>
        <begin position="66"/>
        <end position="156"/>
    </location>
</feature>
<feature type="domain" description="Peptidase C32" evidence="8">
    <location>
        <begin position="157"/>
        <end position="260"/>
    </location>
</feature>
<feature type="domain" description="Peptidase C33" evidence="6">
    <location>
        <begin position="261"/>
        <end position="360"/>
    </location>
</feature>
<feature type="domain" description="Peptidase S32" evidence="5">
    <location>
        <begin position="1065"/>
        <end position="1268"/>
    </location>
</feature>
<feature type="domain" description="NiRAN" evidence="10">
    <location>
        <begin position="1716"/>
        <end position="1883"/>
    </location>
</feature>
<feature type="domain" description="RdRp catalytic" evidence="4">
    <location>
        <begin position="2116"/>
        <end position="2251"/>
    </location>
</feature>
<feature type="domain" description="AV ZBD" evidence="9">
    <location>
        <begin position="2371"/>
        <end position="2438"/>
    </location>
</feature>
<feature type="domain" description="(+)RNA virus helicase ATP-binding">
    <location>
        <begin position="2496"/>
        <end position="2661"/>
    </location>
</feature>
<feature type="domain" description="(+)RNA virus helicase C-terminal">
    <location>
        <begin position="2662"/>
        <end position="2793"/>
    </location>
</feature>
<feature type="domain" description="AV-Nsp11N/CoV-Nsp15M" evidence="12">
    <location>
        <begin position="2840"/>
        <end position="2930"/>
    </location>
</feature>
<feature type="domain" description="NendoU" evidence="11">
    <location>
        <begin position="2932"/>
        <end position="3054"/>
    </location>
</feature>
<feature type="zinc finger region" description="C4-type; atypical">
    <location>
        <begin position="25"/>
        <end position="44"/>
    </location>
</feature>
<feature type="region of interest" description="OTU-like">
    <location>
        <begin position="261"/>
        <end position="339"/>
    </location>
</feature>
<feature type="region of interest" description="Disordered" evidence="13">
    <location>
        <begin position="386"/>
        <end position="451"/>
    </location>
</feature>
<feature type="region of interest" description="HD1">
    <location>
        <begin position="530"/>
        <end position="645"/>
    </location>
</feature>
<feature type="region of interest" description="HD2">
    <location>
        <begin position="829"/>
        <end position="997"/>
    </location>
</feature>
<feature type="region of interest" description="HD3">
    <location>
        <begin position="1291"/>
        <end position="1405"/>
    </location>
</feature>
<feature type="region of interest" description="Disordered" evidence="13">
    <location>
        <begin position="1577"/>
        <end position="1614"/>
    </location>
</feature>
<feature type="compositionally biased region" description="Basic and acidic residues" evidence="13">
    <location>
        <begin position="1600"/>
        <end position="1612"/>
    </location>
</feature>
<feature type="active site" description="For Nsp1 papain-like cysteine proteinase activity" evidence="17 23">
    <location>
        <position position="164"/>
    </location>
</feature>
<feature type="active site" description="For Nsp1 papain-like cysteine proteinase activity" evidence="17">
    <location>
        <position position="230"/>
    </location>
</feature>
<feature type="active site" description="For Nsp2 cysteine proteinase activity" evidence="22">
    <location>
        <position position="270"/>
    </location>
</feature>
<feature type="active site" description="For Nsp2 cysteine proteinase activity" evidence="22">
    <location>
        <position position="332"/>
    </location>
</feature>
<feature type="active site" description="Charge relay system; for 3C-like serine proteinase activity" evidence="5">
    <location>
        <position position="1103"/>
    </location>
</feature>
<feature type="active site" description="Charge relay system; for 3C-like serine proteinase activity" evidence="5">
    <location>
        <position position="1129"/>
    </location>
</feature>
<feature type="active site" description="Charge relay system; for 3C-like serine proteinase activity" evidence="5">
    <location>
        <position position="1184"/>
    </location>
</feature>
<feature type="active site" evidence="11">
    <location>
        <position position="2963"/>
    </location>
</feature>
<feature type="active site" evidence="11">
    <location>
        <position position="2978"/>
    </location>
</feature>
<feature type="active site" evidence="11">
    <location>
        <position position="3007"/>
    </location>
</feature>
<feature type="binding site" evidence="30">
    <location>
        <position position="319"/>
    </location>
    <ligand>
        <name>Zn(2+)</name>
        <dbReference type="ChEBI" id="CHEBI:29105"/>
        <label>1</label>
    </ligand>
</feature>
<feature type="binding site" evidence="30">
    <location>
        <position position="349"/>
    </location>
    <ligand>
        <name>Zn(2+)</name>
        <dbReference type="ChEBI" id="CHEBI:29105"/>
        <label>1</label>
    </ligand>
</feature>
<feature type="binding site" evidence="30">
    <location>
        <position position="354"/>
    </location>
    <ligand>
        <name>Zn(2+)</name>
        <dbReference type="ChEBI" id="CHEBI:29105"/>
        <label>1</label>
    </ligand>
</feature>
<feature type="binding site" evidence="30">
    <location>
        <position position="356"/>
    </location>
    <ligand>
        <name>Zn(2+)</name>
        <dbReference type="ChEBI" id="CHEBI:29105"/>
        <label>1</label>
    </ligand>
</feature>
<feature type="binding site" evidence="9 31 32">
    <location>
        <position position="2374"/>
    </location>
    <ligand>
        <name>Zn(2+)</name>
        <dbReference type="ChEBI" id="CHEBI:29105"/>
        <label>2</label>
    </ligand>
</feature>
<feature type="binding site" evidence="9 31 32">
    <location>
        <position position="2377"/>
    </location>
    <ligand>
        <name>Zn(2+)</name>
        <dbReference type="ChEBI" id="CHEBI:29105"/>
        <label>2</label>
    </ligand>
</feature>
<feature type="binding site" evidence="9 31 32">
    <location>
        <position position="2387"/>
    </location>
    <ligand>
        <name>Zn(2+)</name>
        <dbReference type="ChEBI" id="CHEBI:29105"/>
        <label>3</label>
    </ligand>
</feature>
<feature type="binding site" evidence="9 31 32">
    <location>
        <position position="2392"/>
    </location>
    <ligand>
        <name>Zn(2+)</name>
        <dbReference type="ChEBI" id="CHEBI:29105"/>
        <label>2</label>
    </ligand>
</feature>
<feature type="binding site" evidence="9 31 32">
    <location>
        <position position="2395"/>
    </location>
    <ligand>
        <name>Zn(2+)</name>
        <dbReference type="ChEBI" id="CHEBI:29105"/>
        <label>2</label>
    </ligand>
</feature>
<feature type="binding site" evidence="9 31 32">
    <location>
        <position position="2399"/>
    </location>
    <ligand>
        <name>Zn(2+)</name>
        <dbReference type="ChEBI" id="CHEBI:29105"/>
        <label>3</label>
    </ligand>
</feature>
<feature type="binding site" evidence="9 31 32">
    <location>
        <position position="2402"/>
    </location>
    <ligand>
        <name>Zn(2+)</name>
        <dbReference type="ChEBI" id="CHEBI:29105"/>
        <label>3</label>
    </ligand>
</feature>
<feature type="binding site" evidence="9 31 32">
    <location>
        <position position="2403"/>
    </location>
    <ligand>
        <name>Zn(2+)</name>
        <dbReference type="ChEBI" id="CHEBI:29105"/>
        <label>3</label>
    </ligand>
</feature>
<feature type="binding site" evidence="9 31 32">
    <location>
        <position position="2412"/>
    </location>
    <ligand>
        <name>Zn(2+)</name>
        <dbReference type="ChEBI" id="CHEBI:29105"/>
        <label>4</label>
    </ligand>
</feature>
<feature type="binding site" evidence="9 31 32">
    <location>
        <position position="2414"/>
    </location>
    <ligand>
        <name>Zn(2+)</name>
        <dbReference type="ChEBI" id="CHEBI:29105"/>
        <label>4</label>
    </ligand>
</feature>
<feature type="binding site" evidence="9 31 32">
    <location>
        <position position="2423"/>
    </location>
    <ligand>
        <name>Zn(2+)</name>
        <dbReference type="ChEBI" id="CHEBI:29105"/>
        <label>4</label>
    </ligand>
</feature>
<feature type="binding site" evidence="9 31 32">
    <location>
        <position position="2426"/>
    </location>
    <ligand>
        <name>Zn(2+)</name>
        <dbReference type="ChEBI" id="CHEBI:29105"/>
        <label>4</label>
    </ligand>
</feature>
<feature type="binding site" evidence="1">
    <location>
        <begin position="2528"/>
        <end position="2535"/>
    </location>
    <ligand>
        <name>ATP</name>
        <dbReference type="ChEBI" id="CHEBI:30616"/>
    </ligand>
</feature>
<feature type="site" description="Cleavage; by PCP">
    <location>
        <begin position="260"/>
        <end position="261"/>
    </location>
</feature>
<feature type="site" description="Cleavage; by Nsp2 cysteine proteinase">
    <location>
        <begin position="831"/>
        <end position="832"/>
    </location>
</feature>
<feature type="site" description="Cleavage; by 3CLSP">
    <location>
        <begin position="1064"/>
        <end position="1065"/>
    </location>
</feature>
<feature type="site" description="Cleavage; by 3CLSP; in major pathway">
    <location>
        <begin position="1268"/>
        <end position="1269"/>
    </location>
</feature>
<feature type="site" description="Cleavage; by 3CLSP; in minor pathway">
    <location>
        <begin position="1430"/>
        <end position="1431"/>
    </location>
</feature>
<feature type="site" description="Cleavage; by 3CLSP; in minor pathway">
    <location>
        <begin position="1452"/>
        <end position="1453"/>
    </location>
</feature>
<feature type="site" description="Cleavage; by 3CLSP">
    <location>
        <begin position="1575"/>
        <end position="1576"/>
    </location>
</feature>
<feature type="site" description="Cleavage; by 3CLSP">
    <location>
        <begin position="1677"/>
        <end position="1678"/>
    </location>
</feature>
<feature type="site" description="Cleavage; by 3CLSP">
    <location>
        <begin position="2370"/>
        <end position="2371"/>
    </location>
</feature>
<feature type="site" description="Involved in mRNA transcription process">
    <location>
        <position position="2429"/>
    </location>
</feature>
<feature type="site" description="Cleavage; by 3CLSP">
    <location>
        <begin position="2837"/>
        <end position="2838"/>
    </location>
</feature>
<feature type="site" description="Cleavage; by 3CLSP">
    <location>
        <begin position="3056"/>
        <end position="3057"/>
    </location>
</feature>
<feature type="glycosylation site" description="N-linked (GlcNAc...) asparagine; by host" evidence="29">
    <location>
        <position position="1501"/>
    </location>
</feature>
<feature type="splice variant" id="VSP_032887" description="In isoform Replicase polyprotein 1a." evidence="29">
    <location>
        <begin position="1728"/>
        <end position="3175"/>
    </location>
</feature>
<feature type="mutagenesis site" description="Complete loss of transcription." evidence="15">
    <original>C</original>
    <variation>A</variation>
    <location>
        <position position="25"/>
    </location>
</feature>
<feature type="mutagenesis site" description="Complete loss of transcription." evidence="15">
    <original>C</original>
    <variation>A</variation>
    <location>
        <position position="44"/>
    </location>
</feature>
<feature type="mutagenesis site" description="Complete loss of PCP proteinase activity." evidence="17 23">
    <original>C</original>
    <variation>G</variation>
    <variation>S</variation>
    <location>
        <position position="164"/>
    </location>
</feature>
<feature type="mutagenesis site" description="No effect." evidence="17">
    <original>H</original>
    <variation>A</variation>
    <variation>G</variation>
    <variation>V</variation>
    <location>
        <position position="219"/>
    </location>
</feature>
<feature type="mutagenesis site" description="Complete loss of PCP proteinase activity." evidence="17">
    <original>H</original>
    <variation>A</variation>
    <variation>G</variation>
    <variation>V</variation>
    <location>
        <position position="230"/>
    </location>
</feature>
<feature type="mutagenesis site" description="Complete loss of nsp1-nsp2 cleavage." evidence="17">
    <original>G</original>
    <variation>V</variation>
    <location>
        <position position="260"/>
    </location>
</feature>
<feature type="mutagenesis site" description="Complete loss of CP2 activity." evidence="22">
    <original>C</original>
    <variation>A</variation>
    <variation>H</variation>
    <variation>R</variation>
    <variation>S</variation>
    <location>
        <position position="270"/>
    </location>
</feature>
<feature type="mutagenesis site" description="Complete loss of CP2 activity." evidence="22">
    <original>G</original>
    <variation>W</variation>
    <location>
        <position position="271"/>
    </location>
</feature>
<feature type="mutagenesis site" description="No effect." evidence="22">
    <original>D</original>
    <variation>E</variation>
    <variation>N</variation>
    <location>
        <position position="291"/>
    </location>
</feature>
<feature type="mutagenesis site" description="No effect." evidence="22">
    <original>D</original>
    <variation>E</variation>
    <variation>N</variation>
    <location>
        <position position="295"/>
    </location>
</feature>
<feature type="mutagenesis site" description="No effect." evidence="22">
    <original>D</original>
    <variation>E</variation>
    <variation>N</variation>
    <location>
        <position position="296"/>
    </location>
</feature>
<feature type="mutagenesis site" description="No effect." evidence="22">
    <original>E</original>
    <variation>D</variation>
    <variation>Q</variation>
    <location>
        <position position="297"/>
    </location>
</feature>
<feature type="mutagenesis site" description="Complete loss of CP2 activity." evidence="22">
    <original>C</original>
    <variation>A</variation>
    <variation>H</variation>
    <variation>P</variation>
    <location>
        <position position="319"/>
    </location>
</feature>
<feature type="mutagenesis site" description="Complete loss of CP2 activity." evidence="22">
    <original>H</original>
    <variation>C</variation>
    <variation>I</variation>
    <variation>N</variation>
    <variation>Y</variation>
    <location>
        <position position="332"/>
    </location>
</feature>
<feature type="mutagenesis site" description="No effect." evidence="22">
    <original>C</original>
    <variation>A</variation>
    <location>
        <position position="344"/>
    </location>
</feature>
<feature type="mutagenesis site" description="Almost complete loss of CP2 activity." evidence="22">
    <original>C</original>
    <variation>H</variation>
    <location>
        <position position="344"/>
    </location>
</feature>
<feature type="mutagenesis site" description="Complete loss of CP2 activity." evidence="22">
    <original>C</original>
    <variation>A</variation>
    <variation>H</variation>
    <variation>S</variation>
    <location>
        <position position="349"/>
    </location>
</feature>
<feature type="mutagenesis site" description="Complete loss of CP2 activity." evidence="22">
    <original>C</original>
    <variation>A</variation>
    <variation>H</variation>
    <variation>P</variation>
    <location>
        <position position="354"/>
    </location>
</feature>
<feature type="mutagenesis site" description="Complete loss of CP2 activity." evidence="22">
    <original>C</original>
    <variation>A</variation>
    <location>
        <position position="356"/>
    </location>
</feature>
<feature type="mutagenesis site" description="No effect." evidence="22">
    <original>C</original>
    <variation>H</variation>
    <location>
        <position position="356"/>
    </location>
</feature>
<feature type="mutagenesis site" description="Complete loss of nsp2-nsp3 cleavage." evidence="23">
    <original>G</original>
    <variation>P</variation>
    <location>
        <position position="831"/>
    </location>
</feature>
<feature type="mutagenesis site" description="Complete loss of nsp3-nsp4 cleavage." evidence="23">
    <original>E</original>
    <variation>P</variation>
    <location>
        <position position="1064"/>
    </location>
</feature>
<feature type="mutagenesis site" description="Complete loss of nsp3-nsp4, nsp4-nsp5 and nsp5-nsp6 cleavages." evidence="23">
    <original>H</original>
    <variation>G</variation>
    <variation>R</variation>
    <location>
        <position position="1103"/>
    </location>
</feature>
<feature type="mutagenesis site" description="No effect." evidence="23">
    <original>D</original>
    <variation>N</variation>
    <variation>T</variation>
    <location>
        <position position="1117"/>
    </location>
</feature>
<feature type="mutagenesis site" description="Complete loss of nsp3-nsp4 and nsp5-nsp6 cleavages." evidence="23">
    <original>D</original>
    <variation>E</variation>
    <location>
        <position position="1129"/>
    </location>
</feature>
<feature type="mutagenesis site" description="Complete loss of nsp3-nsp4, nsp4-nsp5 and nsp5-nsp6 cleavages." evidence="23">
    <original>D</original>
    <variation>K</variation>
    <variation>V</variation>
    <location>
        <position position="1129"/>
    </location>
</feature>
<feature type="mutagenesis site" description="Partial loss of nsp4-nsp5 cleavage." evidence="23">
    <original>T</original>
    <variation>G</variation>
    <variation>S</variation>
    <location>
        <position position="1179"/>
    </location>
</feature>
<feature type="mutagenesis site" description="Increased nsp5-nsp6 cleavage." evidence="23">
    <original>T</original>
    <variation>N</variation>
    <location>
        <position position="1179"/>
    </location>
</feature>
<feature type="mutagenesis site" description="Complete loss of nsp3-nsp4, nsp4-nsp5 and nsp5-nsp6 cleavages." evidence="23">
    <original>S</original>
    <variation>C</variation>
    <variation>F</variation>
    <variation>I</variation>
    <variation>T</variation>
    <location>
        <position position="1184"/>
    </location>
</feature>
<feature type="mutagenesis site" description="Complete loss of nsp4-nsp5 and nsp5-nsp6 cleavages." evidence="23">
    <original>H</original>
    <variation>L</variation>
    <variation>R</variation>
    <variation>Y</variation>
    <location>
        <position position="1198"/>
    </location>
</feature>
<feature type="mutagenesis site" description="Complete loss of nsp3-nsp4 and nsp4-nsp5 cleavages." evidence="23 25">
    <original>E</original>
    <variation>P</variation>
    <location>
        <position position="1268"/>
    </location>
</feature>
<feature type="mutagenesis site" description="No effect." evidence="23">
    <original>E</original>
    <variation>P</variation>
    <location>
        <position position="1430"/>
    </location>
</feature>
<feature type="mutagenesis site" description="Complete loss of nsp5-nsp6 cleavage." evidence="23">
    <original>E</original>
    <variation>P</variation>
    <location>
        <position position="1677"/>
    </location>
</feature>
<feature type="mutagenesis site" description="No effect." evidence="26">
    <original>D</original>
    <variation>P</variation>
    <location>
        <position position="2351"/>
    </location>
</feature>
<feature type="mutagenesis site" description="Complete loss of nsp9-nsp10 cleavage." evidence="26">
    <original>E</original>
    <variation>P</variation>
    <location>
        <position position="2370"/>
    </location>
</feature>
<feature type="mutagenesis site" description="RNA can replicate efficiently but does not produce the subgenomic mRNAs required for structural protein expression." evidence="24">
    <original>S</original>
    <variation>P</variation>
    <location>
        <position position="2429"/>
    </location>
</feature>
<feature type="mutagenesis site" description="Abolishes ATPase and helicase activity." evidence="21">
    <original>K</original>
    <variation>Q</variation>
    <location>
        <position position="2534"/>
    </location>
</feature>
<feature type="mutagenesis site" description="No effect." evidence="26">
    <original>E</original>
    <variation>P</variation>
    <location>
        <position position="2800"/>
    </location>
</feature>
<feature type="mutagenesis site" description="No effect." evidence="26">
    <original>D</original>
    <variation>P</variation>
    <location>
        <position position="2819"/>
    </location>
</feature>
<feature type="mutagenesis site" description="Almost complete loss of nsp9-nsp10 cleavage." evidence="26">
    <original>E</original>
    <variation>D</variation>
    <variation>P</variation>
    <variation>Q</variation>
    <location>
        <position position="2835"/>
    </location>
</feature>
<feature type="mutagenesis site" description="No effect." evidence="26">
    <original>Q</original>
    <variation>D</variation>
    <variation>N</variation>
    <location>
        <position position="2837"/>
    </location>
</feature>
<feature type="mutagenesis site" description="Increased nsp9-nsp10 cleavage." evidence="26">
    <original>Q</original>
    <variation>E</variation>
    <location>
        <position position="2837"/>
    </location>
</feature>
<feature type="mutagenesis site" description="Almost complete loss of nsp9-nsp10 cleavage." evidence="26">
    <original>Q</original>
    <variation>P</variation>
    <location>
        <position position="2837"/>
    </location>
</feature>
<feature type="mutagenesis site" description="Complete loss of nsp10-nsp11 cleavage." evidence="26">
    <original>E</original>
    <variation>P</variation>
    <location>
        <position position="3056"/>
    </location>
</feature>
<feature type="helix" evidence="35">
    <location>
        <begin position="270"/>
        <end position="277"/>
    </location>
</feature>
<feature type="turn" evidence="35">
    <location>
        <begin position="278"/>
        <end position="280"/>
    </location>
</feature>
<feature type="strand" evidence="35">
    <location>
        <begin position="283"/>
        <end position="286"/>
    </location>
</feature>
<feature type="helix" evidence="35">
    <location>
        <begin position="290"/>
        <end position="292"/>
    </location>
</feature>
<feature type="helix" evidence="35">
    <location>
        <begin position="296"/>
        <end position="305"/>
    </location>
</feature>
<feature type="strand" evidence="35">
    <location>
        <begin position="309"/>
        <end position="312"/>
    </location>
</feature>
<feature type="strand" evidence="35">
    <location>
        <begin position="323"/>
        <end position="329"/>
    </location>
</feature>
<feature type="strand" evidence="35">
    <location>
        <begin position="332"/>
        <end position="337"/>
    </location>
</feature>
<feature type="helix" evidence="35">
    <location>
        <begin position="347"/>
        <end position="351"/>
    </location>
</feature>
<feature type="helix" evidence="35">
    <location>
        <begin position="369"/>
        <end position="379"/>
    </location>
</feature>
<feature type="turn" evidence="35">
    <location>
        <begin position="380"/>
        <end position="382"/>
    </location>
</feature>
<feature type="strand" evidence="35">
    <location>
        <begin position="383"/>
        <end position="386"/>
    </location>
</feature>
<feature type="strand" evidence="33">
    <location>
        <begin position="1076"/>
        <end position="1092"/>
    </location>
</feature>
<feature type="strand" evidence="33">
    <location>
        <begin position="1095"/>
        <end position="1101"/>
    </location>
</feature>
<feature type="helix" evidence="33">
    <location>
        <begin position="1102"/>
        <end position="1105"/>
    </location>
</feature>
<feature type="strand" evidence="33">
    <location>
        <begin position="1110"/>
        <end position="1115"/>
    </location>
</feature>
<feature type="strand" evidence="33">
    <location>
        <begin position="1118"/>
        <end position="1123"/>
    </location>
</feature>
<feature type="strand" evidence="33">
    <location>
        <begin position="1125"/>
        <end position="1127"/>
    </location>
</feature>
<feature type="strand" evidence="33">
    <location>
        <begin position="1130"/>
        <end position="1135"/>
    </location>
</feature>
<feature type="turn" evidence="33">
    <location>
        <begin position="1137"/>
        <end position="1139"/>
    </location>
</feature>
<feature type="strand" evidence="33">
    <location>
        <begin position="1154"/>
        <end position="1161"/>
    </location>
</feature>
<feature type="strand" evidence="33">
    <location>
        <begin position="1164"/>
        <end position="1170"/>
    </location>
</feature>
<feature type="helix" evidence="33">
    <location>
        <begin position="1181"/>
        <end position="1183"/>
    </location>
</feature>
<feature type="strand" evidence="33">
    <location>
        <begin position="1187"/>
        <end position="1190"/>
    </location>
</feature>
<feature type="strand" evidence="33">
    <location>
        <begin position="1193"/>
        <end position="1202"/>
    </location>
</feature>
<feature type="helix" evidence="33">
    <location>
        <begin position="1203"/>
        <end position="1205"/>
    </location>
</feature>
<feature type="strand" evidence="33">
    <location>
        <begin position="1206"/>
        <end position="1210"/>
    </location>
</feature>
<feature type="strand" evidence="33">
    <location>
        <begin position="1216"/>
        <end position="1220"/>
    </location>
</feature>
<feature type="helix" evidence="33">
    <location>
        <begin position="1224"/>
        <end position="1228"/>
    </location>
</feature>
<feature type="strand" evidence="33">
    <location>
        <begin position="1233"/>
        <end position="1237"/>
    </location>
</feature>
<feature type="strand" evidence="33">
    <location>
        <begin position="1250"/>
        <end position="1254"/>
    </location>
</feature>
<feature type="helix" evidence="33">
    <location>
        <begin position="1255"/>
        <end position="1262"/>
    </location>
</feature>
<feature type="turn" evidence="34">
    <location>
        <begin position="1454"/>
        <end position="1459"/>
    </location>
</feature>
<feature type="helix" evidence="34">
    <location>
        <begin position="1463"/>
        <end position="1474"/>
    </location>
</feature>
<feature type="strand" evidence="34">
    <location>
        <begin position="1476"/>
        <end position="1480"/>
    </location>
</feature>
<feature type="strand" evidence="34">
    <location>
        <begin position="1483"/>
        <end position="1486"/>
    </location>
</feature>
<feature type="helix" evidence="34">
    <location>
        <begin position="1490"/>
        <end position="1506"/>
    </location>
</feature>
<feature type="helix" evidence="34">
    <location>
        <begin position="1510"/>
        <end position="1520"/>
    </location>
</feature>
<feature type="turn" evidence="34">
    <location>
        <begin position="1521"/>
        <end position="1524"/>
    </location>
</feature>
<feature type="strand" evidence="34">
    <location>
        <begin position="1533"/>
        <end position="1539"/>
    </location>
</feature>
<feature type="strand" evidence="34">
    <location>
        <begin position="1545"/>
        <end position="1548"/>
    </location>
</feature>
<feature type="strand" evidence="34">
    <location>
        <begin position="1551"/>
        <end position="1560"/>
    </location>
</feature>
<feature type="strand" evidence="34">
    <location>
        <begin position="1565"/>
        <end position="1573"/>
    </location>
</feature>
<feature type="turn" evidence="36">
    <location>
        <begin position="2375"/>
        <end position="2377"/>
    </location>
</feature>
<feature type="strand" evidence="36">
    <location>
        <begin position="2382"/>
        <end position="2385"/>
    </location>
</feature>
<feature type="turn" evidence="36">
    <location>
        <begin position="2393"/>
        <end position="2395"/>
    </location>
</feature>
<feature type="helix" evidence="36">
    <location>
        <begin position="2396"/>
        <end position="2399"/>
    </location>
</feature>
<feature type="strand" evidence="37">
    <location>
        <begin position="2400"/>
        <end position="2403"/>
    </location>
</feature>
<feature type="strand" evidence="36">
    <location>
        <begin position="2405"/>
        <end position="2409"/>
    </location>
</feature>
<feature type="helix" evidence="36">
    <location>
        <begin position="2416"/>
        <end position="2418"/>
    </location>
</feature>
<feature type="strand" evidence="36">
    <location>
        <begin position="2419"/>
        <end position="2423"/>
    </location>
</feature>
<feature type="turn" evidence="36">
    <location>
        <begin position="2424"/>
        <end position="2428"/>
    </location>
</feature>
<feature type="helix" evidence="36">
    <location>
        <begin position="2440"/>
        <end position="2451"/>
    </location>
</feature>
<feature type="strand" evidence="36">
    <location>
        <begin position="2457"/>
        <end position="2462"/>
    </location>
</feature>
<feature type="strand" evidence="36">
    <location>
        <begin position="2465"/>
        <end position="2468"/>
    </location>
</feature>
<feature type="strand" evidence="36">
    <location>
        <begin position="2470"/>
        <end position="2475"/>
    </location>
</feature>
<feature type="strand" evidence="36">
    <location>
        <begin position="2478"/>
        <end position="2483"/>
    </location>
</feature>
<feature type="strand" evidence="36">
    <location>
        <begin position="2488"/>
        <end position="2494"/>
    </location>
</feature>
<feature type="strand" evidence="36">
    <location>
        <begin position="2496"/>
        <end position="2503"/>
    </location>
</feature>
<feature type="helix" evidence="36">
    <location>
        <begin position="2513"/>
        <end position="2521"/>
    </location>
</feature>
<feature type="strand" evidence="36">
    <location>
        <begin position="2524"/>
        <end position="2527"/>
    </location>
</feature>
<feature type="helix" evidence="36">
    <location>
        <begin position="2534"/>
        <end position="2544"/>
    </location>
</feature>
<feature type="strand" evidence="36">
    <location>
        <begin position="2549"/>
        <end position="2552"/>
    </location>
</feature>
<feature type="helix" evidence="36">
    <location>
        <begin position="2556"/>
        <end position="2568"/>
    </location>
</feature>
<feature type="strand" evidence="36">
    <location>
        <begin position="2591"/>
        <end position="2596"/>
    </location>
</feature>
<feature type="strand" evidence="36">
    <location>
        <begin position="2605"/>
        <end position="2609"/>
    </location>
</feature>
<feature type="turn" evidence="36">
    <location>
        <begin position="2610"/>
        <end position="2614"/>
    </location>
</feature>
<feature type="helix" evidence="36">
    <location>
        <begin position="2617"/>
        <end position="2626"/>
    </location>
</feature>
<feature type="strand" evidence="36">
    <location>
        <begin position="2630"/>
        <end position="2633"/>
    </location>
</feature>
<feature type="turn" evidence="36">
    <location>
        <begin position="2648"/>
        <end position="2651"/>
    </location>
</feature>
<feature type="helix" evidence="36">
    <location>
        <begin position="2652"/>
        <end position="2654"/>
    </location>
</feature>
<feature type="strand" evidence="36">
    <location>
        <begin position="2655"/>
        <end position="2657"/>
    </location>
</feature>
<feature type="strand" evidence="37">
    <location>
        <begin position="2665"/>
        <end position="2667"/>
    </location>
</feature>
<feature type="helix" evidence="36">
    <location>
        <begin position="2669"/>
        <end position="2674"/>
    </location>
</feature>
<feature type="turn" evidence="36">
    <location>
        <begin position="2675"/>
        <end position="2678"/>
    </location>
</feature>
<feature type="strand" evidence="36">
    <location>
        <begin position="2690"/>
        <end position="2693"/>
    </location>
</feature>
<feature type="strand" evidence="36">
    <location>
        <begin position="2702"/>
        <end position="2708"/>
    </location>
</feature>
<feature type="helix" evidence="36">
    <location>
        <begin position="2709"/>
        <end position="2711"/>
    </location>
</feature>
<feature type="strand" evidence="37">
    <location>
        <begin position="2717"/>
        <end position="2719"/>
    </location>
</feature>
<feature type="helix" evidence="36">
    <location>
        <begin position="2720"/>
        <end position="2722"/>
    </location>
</feature>
<feature type="strand" evidence="36">
    <location>
        <begin position="2727"/>
        <end position="2733"/>
    </location>
</feature>
<feature type="strand" evidence="37">
    <location>
        <begin position="2736"/>
        <end position="2738"/>
    </location>
</feature>
<feature type="helix" evidence="36">
    <location>
        <begin position="2742"/>
        <end position="2748"/>
    </location>
</feature>
<feature type="strand" evidence="36">
    <location>
        <begin position="2750"/>
        <end position="2759"/>
    </location>
</feature>
<feature type="helix" evidence="36">
    <location>
        <begin position="2765"/>
        <end position="2768"/>
    </location>
</feature>
<feature type="strand" evidence="38">
    <location>
        <begin position="2841"/>
        <end position="2843"/>
    </location>
</feature>
<feature type="helix" evidence="38">
    <location>
        <begin position="2845"/>
        <end position="2851"/>
    </location>
</feature>
<feature type="strand" evidence="38">
    <location>
        <begin position="2855"/>
        <end position="2858"/>
    </location>
</feature>
<feature type="strand" evidence="38">
    <location>
        <begin position="2862"/>
        <end position="2864"/>
    </location>
</feature>
<feature type="helix" evidence="38">
    <location>
        <begin position="2867"/>
        <end position="2870"/>
    </location>
</feature>
<feature type="strand" evidence="38">
    <location>
        <begin position="2875"/>
        <end position="2879"/>
    </location>
</feature>
<feature type="strand" evidence="38">
    <location>
        <begin position="2882"/>
        <end position="2890"/>
    </location>
</feature>
<feature type="strand" evidence="38">
    <location>
        <begin position="2897"/>
        <end position="2899"/>
    </location>
</feature>
<feature type="strand" evidence="38">
    <location>
        <begin position="2903"/>
        <end position="2905"/>
    </location>
</feature>
<feature type="strand" evidence="38">
    <location>
        <begin position="2908"/>
        <end position="2910"/>
    </location>
</feature>
<feature type="strand" evidence="38">
    <location>
        <begin position="2919"/>
        <end position="2927"/>
    </location>
</feature>
<feature type="strand" evidence="39">
    <location>
        <begin position="2928"/>
        <end position="2930"/>
    </location>
</feature>
<feature type="helix" evidence="38">
    <location>
        <begin position="2941"/>
        <end position="2944"/>
    </location>
</feature>
<feature type="helix" evidence="38">
    <location>
        <begin position="2952"/>
        <end position="2960"/>
    </location>
</feature>
<feature type="helix" evidence="38">
    <location>
        <begin position="2962"/>
        <end position="2965"/>
    </location>
</feature>
<feature type="strand" evidence="38">
    <location>
        <begin position="2968"/>
        <end position="2970"/>
    </location>
</feature>
<feature type="strand" evidence="38">
    <location>
        <begin position="2973"/>
        <end position="2975"/>
    </location>
</feature>
<feature type="strand" evidence="38">
    <location>
        <begin position="2992"/>
        <end position="3001"/>
    </location>
</feature>
<feature type="turn" evidence="38">
    <location>
        <begin position="3002"/>
        <end position="3004"/>
    </location>
</feature>
<feature type="strand" evidence="38">
    <location>
        <begin position="3005"/>
        <end position="3013"/>
    </location>
</feature>
<feature type="helix" evidence="38">
    <location>
        <begin position="3017"/>
        <end position="3023"/>
    </location>
</feature>
<feature type="strand" evidence="38">
    <location>
        <begin position="3027"/>
        <end position="3037"/>
    </location>
</feature>
<feature type="strand" evidence="38">
    <location>
        <begin position="3040"/>
        <end position="3047"/>
    </location>
</feature>
<feature type="turn" evidence="38">
    <location>
        <begin position="3048"/>
        <end position="3050"/>
    </location>
</feature>
<feature type="strand" evidence="38">
    <location>
        <begin position="3051"/>
        <end position="3055"/>
    </location>
</feature>